<dbReference type="EC" id="3.1.1.11"/>
<dbReference type="EMBL" id="AP001302">
    <property type="status" value="NOT_ANNOTATED_CDS"/>
    <property type="molecule type" value="Genomic_DNA"/>
</dbReference>
<dbReference type="EMBL" id="CP002686">
    <property type="protein sequence ID" value="AEE77389.1"/>
    <property type="molecule type" value="Genomic_DNA"/>
</dbReference>
<dbReference type="EMBL" id="DQ653407">
    <property type="protein sequence ID" value="ABK28786.1"/>
    <property type="status" value="ALT_SEQ"/>
    <property type="molecule type" value="mRNA"/>
</dbReference>
<dbReference type="RefSeq" id="NP_189437.1">
    <property type="nucleotide sequence ID" value="NM_113715.1"/>
</dbReference>
<dbReference type="SMR" id="Q3EAY9"/>
<dbReference type="BioGRID" id="7752">
    <property type="interactions" value="1"/>
</dbReference>
<dbReference type="FunCoup" id="Q3EAY9">
    <property type="interactions" value="32"/>
</dbReference>
<dbReference type="STRING" id="3702.Q3EAY9"/>
<dbReference type="GlyCosmos" id="Q3EAY9">
    <property type="glycosylation" value="3 sites, No reported glycans"/>
</dbReference>
<dbReference type="GlyGen" id="Q3EAY9">
    <property type="glycosylation" value="3 sites"/>
</dbReference>
<dbReference type="iPTMnet" id="Q3EAY9"/>
<dbReference type="PaxDb" id="3702-AT3G27980.1"/>
<dbReference type="EnsemblPlants" id="AT3G27980.1">
    <property type="protein sequence ID" value="AT3G27980.1"/>
    <property type="gene ID" value="AT3G27980"/>
</dbReference>
<dbReference type="GeneID" id="822422"/>
<dbReference type="Gramene" id="AT3G27980.1">
    <property type="protein sequence ID" value="AT3G27980.1"/>
    <property type="gene ID" value="AT3G27980"/>
</dbReference>
<dbReference type="KEGG" id="ath:AT3G27980"/>
<dbReference type="Araport" id="AT3G27980"/>
<dbReference type="TAIR" id="AT3G27980"/>
<dbReference type="eggNOG" id="ENOG502QUQ5">
    <property type="taxonomic scope" value="Eukaryota"/>
</dbReference>
<dbReference type="HOGENOM" id="CLU_012243_9_2_1"/>
<dbReference type="InParanoid" id="Q3EAY9"/>
<dbReference type="OMA" id="HANAQIW"/>
<dbReference type="PhylomeDB" id="Q3EAY9"/>
<dbReference type="BioCyc" id="ARA:AT3G27980-MONOMER"/>
<dbReference type="UniPathway" id="UPA00545">
    <property type="reaction ID" value="UER00823"/>
</dbReference>
<dbReference type="PRO" id="PR:Q3EAY9"/>
<dbReference type="Proteomes" id="UP000006548">
    <property type="component" value="Chromosome 3"/>
</dbReference>
<dbReference type="ExpressionAtlas" id="Q3EAY9">
    <property type="expression patterns" value="differential"/>
</dbReference>
<dbReference type="GO" id="GO:0005576">
    <property type="term" value="C:extracellular region"/>
    <property type="evidence" value="ECO:0007669"/>
    <property type="project" value="UniProtKB-KW"/>
</dbReference>
<dbReference type="GO" id="GO:0004857">
    <property type="term" value="F:enzyme inhibitor activity"/>
    <property type="evidence" value="ECO:0007669"/>
    <property type="project" value="InterPro"/>
</dbReference>
<dbReference type="GO" id="GO:0030599">
    <property type="term" value="F:pectinesterase activity"/>
    <property type="evidence" value="ECO:0007669"/>
    <property type="project" value="UniProtKB-EC"/>
</dbReference>
<dbReference type="GO" id="GO:0042545">
    <property type="term" value="P:cell wall modification"/>
    <property type="evidence" value="ECO:0007669"/>
    <property type="project" value="InterPro"/>
</dbReference>
<dbReference type="GO" id="GO:0045490">
    <property type="term" value="P:pectin catabolic process"/>
    <property type="evidence" value="ECO:0007669"/>
    <property type="project" value="UniProtKB-UniPathway"/>
</dbReference>
<dbReference type="FunFam" id="2.160.20.10:FF:000029">
    <property type="entry name" value="Pectinesterase 4"/>
    <property type="match status" value="1"/>
</dbReference>
<dbReference type="Gene3D" id="2.160.20.10">
    <property type="entry name" value="Single-stranded right-handed beta-helix, Pectin lyase-like"/>
    <property type="match status" value="1"/>
</dbReference>
<dbReference type="InterPro" id="IPR012334">
    <property type="entry name" value="Pectin_lyas_fold"/>
</dbReference>
<dbReference type="InterPro" id="IPR011050">
    <property type="entry name" value="Pectin_lyase_fold/virulence"/>
</dbReference>
<dbReference type="InterPro" id="IPR000070">
    <property type="entry name" value="Pectinesterase_cat"/>
</dbReference>
<dbReference type="InterPro" id="IPR006501">
    <property type="entry name" value="Pectinesterase_inhib_dom"/>
</dbReference>
<dbReference type="InterPro" id="IPR018040">
    <property type="entry name" value="Pectinesterase_Tyr_AS"/>
</dbReference>
<dbReference type="PANTHER" id="PTHR31707">
    <property type="entry name" value="PECTINESTERASE"/>
    <property type="match status" value="1"/>
</dbReference>
<dbReference type="Pfam" id="PF01095">
    <property type="entry name" value="Pectinesterase"/>
    <property type="match status" value="1"/>
</dbReference>
<dbReference type="SMART" id="SM00856">
    <property type="entry name" value="PMEI"/>
    <property type="match status" value="1"/>
</dbReference>
<dbReference type="SUPFAM" id="SSF51126">
    <property type="entry name" value="Pectin lyase-like"/>
    <property type="match status" value="1"/>
</dbReference>
<dbReference type="PROSITE" id="PS00800">
    <property type="entry name" value="PECTINESTERASE_1"/>
    <property type="match status" value="1"/>
</dbReference>
<feature type="signal peptide" evidence="2">
    <location>
        <begin position="1"/>
        <end position="21"/>
    </location>
</feature>
<feature type="chain" id="PRO_0000370186" description="Probable pectinesterase 30">
    <location>
        <begin position="22"/>
        <end position="497"/>
    </location>
</feature>
<feature type="active site" description="Proton donor" evidence="1">
    <location>
        <position position="316"/>
    </location>
</feature>
<feature type="active site" description="Nucleophile" evidence="1">
    <location>
        <position position="337"/>
    </location>
</feature>
<feature type="binding site" evidence="1">
    <location>
        <position position="263"/>
    </location>
    <ligand>
        <name>substrate</name>
    </ligand>
</feature>
<feature type="binding site" evidence="1">
    <location>
        <position position="403"/>
    </location>
    <ligand>
        <name>substrate</name>
    </ligand>
</feature>
<feature type="binding site" evidence="1">
    <location>
        <position position="405"/>
    </location>
    <ligand>
        <name>substrate</name>
    </ligand>
</feature>
<feature type="site" description="Transition state stabilizer" evidence="1">
    <location>
        <position position="315"/>
    </location>
</feature>
<feature type="glycosylation site" description="N-linked (GlcNAc...) asparagine" evidence="2">
    <location>
        <position position="238"/>
    </location>
</feature>
<feature type="glycosylation site" description="N-linked (GlcNAc...) asparagine" evidence="2">
    <location>
        <position position="254"/>
    </location>
</feature>
<feature type="glycosylation site" description="N-linked (GlcNAc...) asparagine" evidence="2">
    <location>
        <position position="385"/>
    </location>
</feature>
<feature type="disulfide bond" evidence="1">
    <location>
        <begin position="330"/>
        <end position="350"/>
    </location>
</feature>
<sequence>MLVKVFSFFILMIIMVIGVSKEYCDDKQSCQNLLLELKAGSSSLSEIRRRDLLIIVLKNSVRRIDMAMIGVMDDTKQHEEMENDMLGVKEDTNLFEEMMESEENSHTWLSSVLTSYITCIDEIGEGAYKRRVEPKLENLISRARVVLALFISISLRDNTELISVIPNGPSWLFHVDKKDLYLNAEIADVVVAKDGTGKYSTVNAAIAAAPQHSQKRFVIYIKTGIYDEIVVIENTKPNLTLIGDGQDLTIITGNLSASNVRRTYNTATVASNGNGFIGVDMCFRNTAGPAKGPAVALRVSGDMSVIYRCRVEGYQDALYPHSDRQFYRECFITGTVDFICGNAVAVFQFCQIVARQPKMGQSNVITAQSRATKDVKSGFSIQNCNITTSSDLDTATVKTYLGRPWRRFSTVAVLQSFIGDLVDPAGWTPWKGETGLSTLHYREYQNRGPGAVTSRRVKWSGFKVMKDPKKATEFTVAKLLDGETWLKESRIPYESGL</sequence>
<evidence type="ECO:0000250" key="1"/>
<evidence type="ECO:0000255" key="2"/>
<evidence type="ECO:0000269" key="3">
    <source>
    </source>
</evidence>
<evidence type="ECO:0000305" key="4"/>
<gene>
    <name type="primary">PME30</name>
    <name type="synonym">ARATH30</name>
    <name type="ordered locus">At3g27980</name>
    <name type="ORF">K24A2.9</name>
</gene>
<proteinExistence type="evidence at transcript level"/>
<protein>
    <recommendedName>
        <fullName>Probable pectinesterase 30</fullName>
        <shortName>PE 30</shortName>
        <ecNumber>3.1.1.11</ecNumber>
    </recommendedName>
    <alternativeName>
        <fullName>Pectin methylesterase 30</fullName>
        <shortName>AtPME30</shortName>
    </alternativeName>
</protein>
<accession>Q3EAY9</accession>
<accession>A0MFT0</accession>
<reference key="1">
    <citation type="journal article" date="2000" name="DNA Res.">
        <title>Structural analysis of Arabidopsis thaliana chromosome 3. II. Sequence features of the 4,251,695 bp regions covered by 90 P1, TAC and BAC clones.</title>
        <authorList>
            <person name="Kaneko T."/>
            <person name="Katoh T."/>
            <person name="Sato S."/>
            <person name="Nakamura Y."/>
            <person name="Asamizu E."/>
            <person name="Tabata S."/>
        </authorList>
    </citation>
    <scope>NUCLEOTIDE SEQUENCE [LARGE SCALE GENOMIC DNA]</scope>
    <source>
        <strain>cv. Columbia</strain>
    </source>
</reference>
<reference key="2">
    <citation type="journal article" date="2017" name="Plant J.">
        <title>Araport11: a complete reannotation of the Arabidopsis thaliana reference genome.</title>
        <authorList>
            <person name="Cheng C.Y."/>
            <person name="Krishnakumar V."/>
            <person name="Chan A.P."/>
            <person name="Thibaud-Nissen F."/>
            <person name="Schobel S."/>
            <person name="Town C.D."/>
        </authorList>
    </citation>
    <scope>GENOME REANNOTATION</scope>
    <source>
        <strain>cv. Columbia</strain>
    </source>
</reference>
<reference key="3">
    <citation type="journal article" date="2006" name="Plant Biotechnol. J.">
        <title>Simultaneous high-throughput recombinational cloning of open reading frames in closed and open configurations.</title>
        <authorList>
            <person name="Underwood B.A."/>
            <person name="Vanderhaeghen R."/>
            <person name="Whitford R."/>
            <person name="Town C.D."/>
            <person name="Hilson P."/>
        </authorList>
    </citation>
    <scope>NUCLEOTIDE SEQUENCE [LARGE SCALE MRNA]</scope>
    <source>
        <strain>cv. Columbia</strain>
    </source>
</reference>
<reference key="4">
    <citation type="journal article" date="2004" name="Carbohydr. Res.">
        <title>Pectin methylesterases: sequence-structural features and phylogenetic relationships.</title>
        <authorList>
            <person name="Markovic O."/>
            <person name="Janecek S."/>
        </authorList>
    </citation>
    <scope>GENE FAMILY</scope>
    <scope>NOMENCLATURE</scope>
</reference>
<reference key="5">
    <citation type="journal article" date="2006" name="Planta">
        <title>Comprehensive expression profiling of the pectin methylesterase gene family during silique development in Arabidopsis thaliana.</title>
        <authorList>
            <person name="Louvet R."/>
            <person name="Cavel E."/>
            <person name="Gutierrez L."/>
            <person name="Guenin S."/>
            <person name="Roger D."/>
            <person name="Gillet F."/>
            <person name="Guerineau F."/>
            <person name="Pelloux J."/>
        </authorList>
    </citation>
    <scope>TISSUE SPECIFICITY</scope>
    <scope>DEVELOPMENTAL STAGE</scope>
</reference>
<name>PME30_ARATH</name>
<keyword id="KW-0063">Aspartyl esterase</keyword>
<keyword id="KW-0134">Cell wall</keyword>
<keyword id="KW-0961">Cell wall biogenesis/degradation</keyword>
<keyword id="KW-1015">Disulfide bond</keyword>
<keyword id="KW-0325">Glycoprotein</keyword>
<keyword id="KW-0378">Hydrolase</keyword>
<keyword id="KW-1185">Reference proteome</keyword>
<keyword id="KW-0964">Secreted</keyword>
<keyword id="KW-0732">Signal</keyword>
<organism>
    <name type="scientific">Arabidopsis thaliana</name>
    <name type="common">Mouse-ear cress</name>
    <dbReference type="NCBI Taxonomy" id="3702"/>
    <lineage>
        <taxon>Eukaryota</taxon>
        <taxon>Viridiplantae</taxon>
        <taxon>Streptophyta</taxon>
        <taxon>Embryophyta</taxon>
        <taxon>Tracheophyta</taxon>
        <taxon>Spermatophyta</taxon>
        <taxon>Magnoliopsida</taxon>
        <taxon>eudicotyledons</taxon>
        <taxon>Gunneridae</taxon>
        <taxon>Pentapetalae</taxon>
        <taxon>rosids</taxon>
        <taxon>malvids</taxon>
        <taxon>Brassicales</taxon>
        <taxon>Brassicaceae</taxon>
        <taxon>Camelineae</taxon>
        <taxon>Arabidopsis</taxon>
    </lineage>
</organism>
<comment type="function">
    <text evidence="1">Acts in the modification of cell walls via demethylesterification of cell wall pectin.</text>
</comment>
<comment type="catalytic activity">
    <reaction>
        <text>[(1-&gt;4)-alpha-D-galacturonosyl methyl ester](n) + n H2O = [(1-&gt;4)-alpha-D-galacturonosyl](n) + n methanol + n H(+)</text>
        <dbReference type="Rhea" id="RHEA:22380"/>
        <dbReference type="Rhea" id="RHEA-COMP:14570"/>
        <dbReference type="Rhea" id="RHEA-COMP:14573"/>
        <dbReference type="ChEBI" id="CHEBI:15377"/>
        <dbReference type="ChEBI" id="CHEBI:15378"/>
        <dbReference type="ChEBI" id="CHEBI:17790"/>
        <dbReference type="ChEBI" id="CHEBI:140522"/>
        <dbReference type="ChEBI" id="CHEBI:140523"/>
        <dbReference type="EC" id="3.1.1.11"/>
    </reaction>
</comment>
<comment type="pathway">
    <text>Glycan metabolism; pectin degradation; 2-dehydro-3-deoxy-D-gluconate from pectin: step 1/5.</text>
</comment>
<comment type="subcellular location">
    <subcellularLocation>
        <location evidence="1">Secreted</location>
        <location evidence="1">Cell wall</location>
    </subcellularLocation>
</comment>
<comment type="tissue specificity">
    <text evidence="3">Expressed in siliques.</text>
</comment>
<comment type="developmental stage">
    <text evidence="3">Expressed during late developmental phases of siliques.</text>
</comment>
<comment type="similarity">
    <text evidence="4">Belongs to the pectinesterase family.</text>
</comment>
<comment type="sequence caution" evidence="4">
    <conflict type="miscellaneous discrepancy">
        <sequence resource="EMBL-CDS" id="ABK28786"/>
    </conflict>
    <text>Intron retention.</text>
</comment>